<comment type="function">
    <text evidence="1">An accessory protein needed during the final step in the assembly of 30S ribosomal subunit, possibly for assembly of the head region. Essential for efficient processing of 16S rRNA. May be needed both before and after RbfA during the maturation of 16S rRNA. It has affinity for free ribosomal 30S subunits but not for 70S ribosomes.</text>
</comment>
<comment type="subunit">
    <text evidence="1">Binds ribosomal protein uS19.</text>
</comment>
<comment type="subcellular location">
    <subcellularLocation>
        <location evidence="1">Cytoplasm</location>
    </subcellularLocation>
</comment>
<comment type="domain">
    <text evidence="1">The PRC barrel domain binds ribosomal protein uS19.</text>
</comment>
<comment type="similarity">
    <text evidence="1">Belongs to the RimM family.</text>
</comment>
<name>RIMM_SINFN</name>
<reference key="1">
    <citation type="journal article" date="2009" name="Appl. Environ. Microbiol.">
        <title>Rhizobium sp. strain NGR234 possesses a remarkable number of secretion systems.</title>
        <authorList>
            <person name="Schmeisser C."/>
            <person name="Liesegang H."/>
            <person name="Krysciak D."/>
            <person name="Bakkou N."/>
            <person name="Le Quere A."/>
            <person name="Wollherr A."/>
            <person name="Heinemeyer I."/>
            <person name="Morgenstern B."/>
            <person name="Pommerening-Roeser A."/>
            <person name="Flores M."/>
            <person name="Palacios R."/>
            <person name="Brenner S."/>
            <person name="Gottschalk G."/>
            <person name="Schmitz R.A."/>
            <person name="Broughton W.J."/>
            <person name="Perret X."/>
            <person name="Strittmatter A.W."/>
            <person name="Streit W.R."/>
        </authorList>
    </citation>
    <scope>NUCLEOTIDE SEQUENCE [LARGE SCALE GENOMIC DNA]</scope>
    <source>
        <strain>NBRC 101917 / NGR234</strain>
    </source>
</reference>
<protein>
    <recommendedName>
        <fullName evidence="1">Ribosome maturation factor RimM</fullName>
    </recommendedName>
</protein>
<proteinExistence type="inferred from homology"/>
<dbReference type="EMBL" id="CP001389">
    <property type="protein sequence ID" value="ACP26955.1"/>
    <property type="molecule type" value="Genomic_DNA"/>
</dbReference>
<dbReference type="RefSeq" id="WP_012709703.1">
    <property type="nucleotide sequence ID" value="NC_012587.1"/>
</dbReference>
<dbReference type="RefSeq" id="YP_002827708.1">
    <property type="nucleotide sequence ID" value="NC_012587.1"/>
</dbReference>
<dbReference type="SMR" id="C3MAG2"/>
<dbReference type="STRING" id="394.NGR_c32220"/>
<dbReference type="KEGG" id="rhi:NGR_c32220"/>
<dbReference type="PATRIC" id="fig|394.7.peg.6060"/>
<dbReference type="eggNOG" id="COG0806">
    <property type="taxonomic scope" value="Bacteria"/>
</dbReference>
<dbReference type="HOGENOM" id="CLU_077636_0_1_5"/>
<dbReference type="OrthoDB" id="9788191at2"/>
<dbReference type="Proteomes" id="UP000001054">
    <property type="component" value="Chromosome"/>
</dbReference>
<dbReference type="GO" id="GO:0005737">
    <property type="term" value="C:cytoplasm"/>
    <property type="evidence" value="ECO:0007669"/>
    <property type="project" value="UniProtKB-SubCell"/>
</dbReference>
<dbReference type="GO" id="GO:0005840">
    <property type="term" value="C:ribosome"/>
    <property type="evidence" value="ECO:0007669"/>
    <property type="project" value="InterPro"/>
</dbReference>
<dbReference type="GO" id="GO:0043022">
    <property type="term" value="F:ribosome binding"/>
    <property type="evidence" value="ECO:0007669"/>
    <property type="project" value="InterPro"/>
</dbReference>
<dbReference type="GO" id="GO:0042274">
    <property type="term" value="P:ribosomal small subunit biogenesis"/>
    <property type="evidence" value="ECO:0007669"/>
    <property type="project" value="UniProtKB-UniRule"/>
</dbReference>
<dbReference type="GO" id="GO:0006364">
    <property type="term" value="P:rRNA processing"/>
    <property type="evidence" value="ECO:0007669"/>
    <property type="project" value="UniProtKB-UniRule"/>
</dbReference>
<dbReference type="Gene3D" id="2.30.30.240">
    <property type="entry name" value="PRC-barrel domain"/>
    <property type="match status" value="1"/>
</dbReference>
<dbReference type="Gene3D" id="2.40.30.60">
    <property type="entry name" value="RimM"/>
    <property type="match status" value="1"/>
</dbReference>
<dbReference type="HAMAP" id="MF_00014">
    <property type="entry name" value="Ribosome_mat_RimM"/>
    <property type="match status" value="1"/>
</dbReference>
<dbReference type="InterPro" id="IPR027275">
    <property type="entry name" value="PRC-brl_dom"/>
</dbReference>
<dbReference type="InterPro" id="IPR011033">
    <property type="entry name" value="PRC_barrel-like_sf"/>
</dbReference>
<dbReference type="InterPro" id="IPR011961">
    <property type="entry name" value="RimM"/>
</dbReference>
<dbReference type="InterPro" id="IPR002676">
    <property type="entry name" value="RimM_N"/>
</dbReference>
<dbReference type="InterPro" id="IPR036976">
    <property type="entry name" value="RimM_N_sf"/>
</dbReference>
<dbReference type="InterPro" id="IPR009000">
    <property type="entry name" value="Transl_B-barrel_sf"/>
</dbReference>
<dbReference type="NCBIfam" id="TIGR02273">
    <property type="entry name" value="16S_RimM"/>
    <property type="match status" value="1"/>
</dbReference>
<dbReference type="PANTHER" id="PTHR33692">
    <property type="entry name" value="RIBOSOME MATURATION FACTOR RIMM"/>
    <property type="match status" value="1"/>
</dbReference>
<dbReference type="PANTHER" id="PTHR33692:SF1">
    <property type="entry name" value="RIBOSOME MATURATION FACTOR RIMM"/>
    <property type="match status" value="1"/>
</dbReference>
<dbReference type="Pfam" id="PF05239">
    <property type="entry name" value="PRC"/>
    <property type="match status" value="1"/>
</dbReference>
<dbReference type="Pfam" id="PF01782">
    <property type="entry name" value="RimM"/>
    <property type="match status" value="1"/>
</dbReference>
<dbReference type="SUPFAM" id="SSF50346">
    <property type="entry name" value="PRC-barrel domain"/>
    <property type="match status" value="1"/>
</dbReference>
<dbReference type="SUPFAM" id="SSF50447">
    <property type="entry name" value="Translation proteins"/>
    <property type="match status" value="1"/>
</dbReference>
<sequence>MTKLENPVLMATIGAAQGLRGEVRVKSFTDDPTALGDYGNLHSEDGRVFEVLEVRETKNVVIVRFRGINDRSAAEALNGLELFIERDNLPDDDLDEDEFFYADLEGLEAVDGTGKSYGSVTGVFDFGAGDLLELKGPGRRPVLIPFTEWSVLEIDLEAGKLLVDPVAAGLVEDKDESLDKQFPTKRK</sequence>
<feature type="chain" id="PRO_1000196567" description="Ribosome maturation factor RimM">
    <location>
        <begin position="1"/>
        <end position="187"/>
    </location>
</feature>
<feature type="domain" description="PRC barrel" evidence="1">
    <location>
        <begin position="95"/>
        <end position="178"/>
    </location>
</feature>
<keyword id="KW-0143">Chaperone</keyword>
<keyword id="KW-0963">Cytoplasm</keyword>
<keyword id="KW-1185">Reference proteome</keyword>
<keyword id="KW-0690">Ribosome biogenesis</keyword>
<keyword id="KW-0698">rRNA processing</keyword>
<gene>
    <name evidence="1" type="primary">rimM</name>
    <name type="ordered locus">NGR_c32220</name>
</gene>
<organism>
    <name type="scientific">Sinorhizobium fredii (strain NBRC 101917 / NGR234)</name>
    <dbReference type="NCBI Taxonomy" id="394"/>
    <lineage>
        <taxon>Bacteria</taxon>
        <taxon>Pseudomonadati</taxon>
        <taxon>Pseudomonadota</taxon>
        <taxon>Alphaproteobacteria</taxon>
        <taxon>Hyphomicrobiales</taxon>
        <taxon>Rhizobiaceae</taxon>
        <taxon>Sinorhizobium/Ensifer group</taxon>
        <taxon>Sinorhizobium</taxon>
    </lineage>
</organism>
<accession>C3MAG2</accession>
<evidence type="ECO:0000255" key="1">
    <source>
        <dbReference type="HAMAP-Rule" id="MF_00014"/>
    </source>
</evidence>